<organismHost>
    <name type="scientific">Homo sapiens</name>
    <name type="common">Human</name>
    <dbReference type="NCBI Taxonomy" id="9606"/>
</organismHost>
<proteinExistence type="inferred from homology"/>
<accession>Q9QBY4</accession>
<organism>
    <name type="scientific">Human immunodeficiency virus type 1 group M subtype K (isolate 96CM-MP535)</name>
    <name type="common">HIV-1</name>
    <dbReference type="NCBI Taxonomy" id="388906"/>
    <lineage>
        <taxon>Viruses</taxon>
        <taxon>Riboviria</taxon>
        <taxon>Pararnavirae</taxon>
        <taxon>Artverviricota</taxon>
        <taxon>Revtraviricetes</taxon>
        <taxon>Ortervirales</taxon>
        <taxon>Retroviridae</taxon>
        <taxon>Orthoretrovirinae</taxon>
        <taxon>Lentivirus</taxon>
        <taxon>Human immunodeficiency virus type 1</taxon>
    </lineage>
</organism>
<gene>
    <name type="primary">gag</name>
</gene>
<feature type="initiator methionine" description="Removed; by host" evidence="1">
    <location>
        <position position="1"/>
    </location>
</feature>
<feature type="chain" id="PRO_0000261205" description="Gag polyprotein">
    <location>
        <begin position="2"/>
        <end position="495"/>
    </location>
</feature>
<feature type="chain" id="PRO_0000246350" description="Matrix protein p17" evidence="1">
    <location>
        <begin position="2"/>
        <end position="128"/>
    </location>
</feature>
<feature type="chain" id="PRO_0000246351" description="Capsid protein p24" evidence="1">
    <location>
        <begin position="129"/>
        <end position="359"/>
    </location>
</feature>
<feature type="peptide" id="PRO_0000246352" description="Spacer peptide 1" evidence="1">
    <location>
        <begin position="360"/>
        <end position="372"/>
    </location>
</feature>
<feature type="chain" id="PRO_0000246353" description="Nucleocapsid protein p7" evidence="1">
    <location>
        <begin position="373"/>
        <end position="427"/>
    </location>
</feature>
<feature type="peptide" id="PRO_0000246354" description="Spacer peptide 2" evidence="1">
    <location>
        <begin position="428"/>
        <end position="443"/>
    </location>
</feature>
<feature type="chain" id="PRO_0000246355" description="p6-gag" evidence="1">
    <location>
        <begin position="444"/>
        <end position="495"/>
    </location>
</feature>
<feature type="zinc finger region" description="CCHC-type 1" evidence="8">
    <location>
        <begin position="385"/>
        <end position="402"/>
    </location>
</feature>
<feature type="zinc finger region" description="CCHC-type 2" evidence="8">
    <location>
        <begin position="406"/>
        <end position="423"/>
    </location>
</feature>
<feature type="region of interest" description="Interaction with Gp41" evidence="6">
    <location>
        <begin position="7"/>
        <end position="31"/>
    </location>
</feature>
<feature type="region of interest" description="Interaction with host CALM1" evidence="5">
    <location>
        <begin position="8"/>
        <end position="43"/>
    </location>
</feature>
<feature type="region of interest" description="Interaction with host AP3D1" evidence="7">
    <location>
        <begin position="12"/>
        <end position="19"/>
    </location>
</feature>
<feature type="region of interest" description="Interaction with membrane phosphatidylinositol 4,5-bisphosphate and RNA" evidence="6">
    <location>
        <begin position="14"/>
        <end position="33"/>
    </location>
</feature>
<feature type="region of interest" description="Interaction with membrane phosphatidylinositol 4,5-bisphosphate" evidence="6">
    <location>
        <begin position="73"/>
        <end position="77"/>
    </location>
</feature>
<feature type="region of interest" description="Interaction with host PPIA/CYPA and NUP153" evidence="6">
    <location>
        <begin position="185"/>
        <end position="223"/>
    </location>
</feature>
<feature type="region of interest" description="PPIA/CYPA-binding loop" evidence="5">
    <location>
        <begin position="213"/>
        <end position="221"/>
    </location>
</feature>
<feature type="region of interest" description="Dimerization/Multimerization of capsid protein p24" evidence="5">
    <location>
        <begin position="273"/>
        <end position="359"/>
    </location>
</feature>
<feature type="region of interest" description="Disordered" evidence="9">
    <location>
        <begin position="433"/>
        <end position="495"/>
    </location>
</feature>
<feature type="short sequence motif" description="Nuclear export signal" evidence="1">
    <location>
        <begin position="16"/>
        <end position="22"/>
    </location>
</feature>
<feature type="short sequence motif" description="Nuclear localization signal" evidence="1">
    <location>
        <begin position="26"/>
        <end position="32"/>
    </location>
</feature>
<feature type="short sequence motif" description="PTAP/PSAP motif">
    <location>
        <begin position="450"/>
        <end position="453"/>
    </location>
</feature>
<feature type="site" description="Cleavage; by viral protease" evidence="1">
    <location>
        <begin position="128"/>
        <end position="129"/>
    </location>
</feature>
<feature type="site" description="Cleavage; by viral protease" evidence="1">
    <location>
        <begin position="359"/>
        <end position="360"/>
    </location>
</feature>
<feature type="site" description="Cleavage; by viral protease" evidence="1">
    <location>
        <begin position="372"/>
        <end position="373"/>
    </location>
</feature>
<feature type="site" description="Cleavage; by viral protease" evidence="1">
    <location>
        <begin position="427"/>
        <end position="428"/>
    </location>
</feature>
<feature type="site" description="Cleavage; by viral protease" evidence="1">
    <location>
        <begin position="443"/>
        <end position="444"/>
    </location>
</feature>
<feature type="modified residue" description="Phosphoserine; by host MAPK1" evidence="6">
    <location>
        <position position="144"/>
    </location>
</feature>
<feature type="modified residue" description="Asymmetric dimethylarginine; in Nucleocapsid protein p7; by host PRMT6" evidence="1">
    <location>
        <position position="382"/>
    </location>
</feature>
<feature type="modified residue" description="Asymmetric dimethylarginine; in Nucleocapsid protein p7; by host PRMT6" evidence="1">
    <location>
        <position position="404"/>
    </location>
</feature>
<feature type="lipid moiety-binding region" description="N-myristoyl glycine; by host" evidence="1">
    <location>
        <position position="2"/>
    </location>
</feature>
<dbReference type="EMBL" id="AJ249239">
    <property type="protein sequence ID" value="CAB58988.1"/>
    <property type="molecule type" value="Genomic_RNA"/>
</dbReference>
<dbReference type="SMR" id="Q9QBY4"/>
<dbReference type="PRO" id="PR:Q9QBY4"/>
<dbReference type="Proteomes" id="UP000101651">
    <property type="component" value="Segment"/>
</dbReference>
<dbReference type="GO" id="GO:0042025">
    <property type="term" value="C:host cell nucleus"/>
    <property type="evidence" value="ECO:0007669"/>
    <property type="project" value="UniProtKB-SubCell"/>
</dbReference>
<dbReference type="GO" id="GO:0020002">
    <property type="term" value="C:host cell plasma membrane"/>
    <property type="evidence" value="ECO:0007669"/>
    <property type="project" value="UniProtKB-SubCell"/>
</dbReference>
<dbReference type="GO" id="GO:0072494">
    <property type="term" value="C:host multivesicular body"/>
    <property type="evidence" value="ECO:0007669"/>
    <property type="project" value="UniProtKB-SubCell"/>
</dbReference>
<dbReference type="GO" id="GO:0016020">
    <property type="term" value="C:membrane"/>
    <property type="evidence" value="ECO:0007669"/>
    <property type="project" value="UniProtKB-KW"/>
</dbReference>
<dbReference type="GO" id="GO:0019013">
    <property type="term" value="C:viral nucleocapsid"/>
    <property type="evidence" value="ECO:0007669"/>
    <property type="project" value="UniProtKB-KW"/>
</dbReference>
<dbReference type="GO" id="GO:0055036">
    <property type="term" value="C:virion membrane"/>
    <property type="evidence" value="ECO:0007669"/>
    <property type="project" value="UniProtKB-SubCell"/>
</dbReference>
<dbReference type="GO" id="GO:0003723">
    <property type="term" value="F:RNA binding"/>
    <property type="evidence" value="ECO:0007669"/>
    <property type="project" value="UniProtKB-KW"/>
</dbReference>
<dbReference type="GO" id="GO:0005198">
    <property type="term" value="F:structural molecule activity"/>
    <property type="evidence" value="ECO:0007669"/>
    <property type="project" value="InterPro"/>
</dbReference>
<dbReference type="GO" id="GO:0008270">
    <property type="term" value="F:zinc ion binding"/>
    <property type="evidence" value="ECO:0007669"/>
    <property type="project" value="UniProtKB-KW"/>
</dbReference>
<dbReference type="GO" id="GO:0039702">
    <property type="term" value="P:viral budding via host ESCRT complex"/>
    <property type="evidence" value="ECO:0007669"/>
    <property type="project" value="UniProtKB-KW"/>
</dbReference>
<dbReference type="GO" id="GO:0075523">
    <property type="term" value="P:viral translational frameshifting"/>
    <property type="evidence" value="ECO:0007669"/>
    <property type="project" value="UniProtKB-KW"/>
</dbReference>
<dbReference type="FunFam" id="1.10.1200.30:FF:000001">
    <property type="entry name" value="Gag polyprotein"/>
    <property type="match status" value="1"/>
</dbReference>
<dbReference type="FunFam" id="1.10.375.10:FF:000001">
    <property type="entry name" value="Gag polyprotein"/>
    <property type="match status" value="1"/>
</dbReference>
<dbReference type="FunFam" id="4.10.60.10:FF:000001">
    <property type="entry name" value="Gag polyprotein"/>
    <property type="match status" value="1"/>
</dbReference>
<dbReference type="Gene3D" id="1.10.1200.30">
    <property type="match status" value="1"/>
</dbReference>
<dbReference type="Gene3D" id="6.10.250.390">
    <property type="match status" value="1"/>
</dbReference>
<dbReference type="Gene3D" id="1.10.375.10">
    <property type="entry name" value="Human Immunodeficiency Virus Type 1 Capsid Protein"/>
    <property type="match status" value="1"/>
</dbReference>
<dbReference type="Gene3D" id="1.10.150.90">
    <property type="entry name" value="Immunodeficiency lentiviruses, gag gene matrix protein p17"/>
    <property type="match status" value="1"/>
</dbReference>
<dbReference type="Gene3D" id="1.20.5.760">
    <property type="entry name" value="Single helix bin"/>
    <property type="match status" value="1"/>
</dbReference>
<dbReference type="Gene3D" id="4.10.60.10">
    <property type="entry name" value="Zinc finger, CCHC-type"/>
    <property type="match status" value="1"/>
</dbReference>
<dbReference type="InterPro" id="IPR045345">
    <property type="entry name" value="Gag_p24_C"/>
</dbReference>
<dbReference type="InterPro" id="IPR014817">
    <property type="entry name" value="Gag_p6"/>
</dbReference>
<dbReference type="InterPro" id="IPR000071">
    <property type="entry name" value="Lentvrl_matrix_N"/>
</dbReference>
<dbReference type="InterPro" id="IPR012344">
    <property type="entry name" value="Matrix_HIV/RSV_N"/>
</dbReference>
<dbReference type="InterPro" id="IPR050195">
    <property type="entry name" value="Primate_lentivir_Gag_pol-like"/>
</dbReference>
<dbReference type="InterPro" id="IPR008916">
    <property type="entry name" value="Retrov_capsid_C"/>
</dbReference>
<dbReference type="InterPro" id="IPR008919">
    <property type="entry name" value="Retrov_capsid_N"/>
</dbReference>
<dbReference type="InterPro" id="IPR010999">
    <property type="entry name" value="Retrovr_matrix"/>
</dbReference>
<dbReference type="InterPro" id="IPR001878">
    <property type="entry name" value="Znf_CCHC"/>
</dbReference>
<dbReference type="InterPro" id="IPR036875">
    <property type="entry name" value="Znf_CCHC_sf"/>
</dbReference>
<dbReference type="PANTHER" id="PTHR40389:SF4">
    <property type="match status" value="1"/>
</dbReference>
<dbReference type="PANTHER" id="PTHR40389">
    <property type="entry name" value="ENDOGENOUS RETROVIRUS GROUP K MEMBER 24 GAG POLYPROTEIN-RELATED"/>
    <property type="match status" value="1"/>
</dbReference>
<dbReference type="Pfam" id="PF00540">
    <property type="entry name" value="Gag_p17"/>
    <property type="match status" value="1"/>
</dbReference>
<dbReference type="Pfam" id="PF19317">
    <property type="entry name" value="Gag_p24_C"/>
    <property type="match status" value="1"/>
</dbReference>
<dbReference type="Pfam" id="PF08705">
    <property type="entry name" value="Gag_p6"/>
    <property type="match status" value="1"/>
</dbReference>
<dbReference type="Pfam" id="PF00098">
    <property type="entry name" value="zf-CCHC"/>
    <property type="match status" value="2"/>
</dbReference>
<dbReference type="PRINTS" id="PR00234">
    <property type="entry name" value="HIV1MATRIX"/>
</dbReference>
<dbReference type="SMART" id="SM00343">
    <property type="entry name" value="ZnF_C2HC"/>
    <property type="match status" value="2"/>
</dbReference>
<dbReference type="SUPFAM" id="SSF47836">
    <property type="entry name" value="Retroviral matrix proteins"/>
    <property type="match status" value="1"/>
</dbReference>
<dbReference type="SUPFAM" id="SSF47353">
    <property type="entry name" value="Retrovirus capsid dimerization domain-like"/>
    <property type="match status" value="1"/>
</dbReference>
<dbReference type="SUPFAM" id="SSF47943">
    <property type="entry name" value="Retrovirus capsid protein, N-terminal core domain"/>
    <property type="match status" value="1"/>
</dbReference>
<dbReference type="SUPFAM" id="SSF57756">
    <property type="entry name" value="Retrovirus zinc finger-like domains"/>
    <property type="match status" value="1"/>
</dbReference>
<dbReference type="PROSITE" id="PS50158">
    <property type="entry name" value="ZF_CCHC"/>
    <property type="match status" value="2"/>
</dbReference>
<comment type="function">
    <molecule>Gag polyprotein</molecule>
    <text evidence="5">Mediates, with Gag-Pol polyprotein, the essential events in virion assembly, including binding the plasma membrane, making the protein-protein interactions necessary to create spherical particles, recruiting the viral Env proteins, and packaging the genomic RNA via direct interactions with the RNA packaging sequence (Psi).</text>
</comment>
<comment type="function">
    <molecule>Matrix protein p17</molecule>
    <text evidence="1 6">Targets the polyprotein to the plasma membrane via a multipartite membrane-binding signal, that includes its myristoylated N-terminus (By similarity). Matrix protein is part of the pre-integration complex. Implicated in the release from host cell mediated by Vpu. Binds to RNA (By similarity).</text>
</comment>
<comment type="function">
    <molecule>Capsid protein p24</molecule>
    <text evidence="5 6">Forms the conical core that encapsulates the genomic RNA-nucleocapsid complex in the virion. Most core are conical, with only 7% tubular. The core is constituted by capsid protein hexamer subunits. The core is disassembled soon after virion entry (By similarity). The capsid promotes immune invasion by cloaking viral DNA from CGAS detection (By similarity). Host restriction factors such as TRIM5-alpha or TRIMCyp bind retroviral capsids and cause premature capsid disassembly, leading to blocks in reverse transcription. Capsid restriction by TRIM5 is one of the factors which restricts HIV-1 to the human species. Host PIN1 apparently facilitates the virion uncoating (By similarity). On the other hand, interactions with PDZD8 or CYPA stabilize the capsid (By similarity).</text>
</comment>
<comment type="function">
    <molecule>Nucleocapsid protein p7</molecule>
    <text evidence="5">Encapsulates and protects viral dimeric unspliced genomic RNA (gRNA). Binds these RNAs through its zinc fingers. Acts as a nucleic acid chaperone which is involved in rearangement of nucleic acid secondary structure during gRNA retrotranscription. Also facilitates template switch leading to recombination. As part of the polyprotein, participates in gRNA dimerization, packaging, tRNA incorporation and virion assembly.</text>
</comment>
<comment type="function">
    <molecule>p6-gag</molecule>
    <text evidence="6">Plays a role in budding of the assembled particle by interacting with the host class E VPS proteins TSG101 and PDCD6IP/AIP1.</text>
</comment>
<comment type="subunit">
    <molecule>Gag polyprotein</molecule>
    <text evidence="4 5">Homotrimer; further assembles as hexamers of trimers. Oligomerization possibly creates a central hole into which the cytoplasmic tail of the gp41 envelope protein may be inserted. Interacts with host TRIM22; this interaction seems to disrupt proper trafficking of Gag polyprotein and may interfere with budding. Interacts with host PDZD8. When ubiquitinated, interacts (via p6-gag domain) with host PACSIN2; this interaction allows PACSIN2 recruitment to viral assembly sites and its subsequent incorporation into virions. Interacts with MOV10 (By similarity).</text>
</comment>
<comment type="subunit">
    <molecule>Matrix protein p17</molecule>
    <text evidence="5 6">Homotrimer; further assembles as hexamers of trimers. Interacts with gp41 (via C-terminus). Interacts with host CALM1; this interaction induces a conformational change in the Matrix protein, triggering exposure of the myristate group. Interacts with host AP3D1; this interaction allows the polyprotein trafficking to multivesicular bodies during virus assembly. Part of the pre-integration complex (PIC) which is composed of viral genome, matrix protein, Vpr and integrase.</text>
</comment>
<comment type="subunit">
    <molecule>Capsid protein p24</molecule>
    <text evidence="5 6">Homodimer; the homodimer further multimerizes as homohexamers or homopentamers (By similarity). Interacts with host NUP98 (By similarity). Interacts with host PPIA/CYPA; this interaction stabilizes the capsid (By similarity). Interacts with host NUP153 (By similarity). Interacts with host PDZD8; this interaction stabilizes the capsid. Interacts with host TRIM5; this interaction destabilizes the capsid (By similarity). Interacts with host CPSF6 (By similarity). Interacts with host NONO; the interaction is weak (By similarity).</text>
</comment>
<comment type="subunit">
    <molecule>Nucleocapsid protein p7</molecule>
    <text evidence="6">Interacts with host NUP98.</text>
</comment>
<comment type="subunit">
    <molecule>p6-gag</molecule>
    <text evidence="3 6">Interacts with Vpr; this interaction allows Vpr incorporation into the virion. Interacts with host TSG101. p6-gag interacts with host PDCD6IP/AIP1.</text>
</comment>
<comment type="subcellular location">
    <molecule>Gag polyprotein</molecule>
    <subcellularLocation>
        <location evidence="6">Host cell membrane</location>
        <topology evidence="6">Lipid-anchor</topology>
    </subcellularLocation>
    <subcellularLocation>
        <location evidence="6">Host endosome</location>
        <location evidence="6">Host multivesicular body</location>
    </subcellularLocation>
    <text evidence="6">These locations are probably linked to virus assembly sites. The main location is the cell membrane, but under some circumstances, late endosomal compartments can serve as productive sites for virion assembly.</text>
</comment>
<comment type="subcellular location">
    <molecule>Matrix protein p17</molecule>
    <subcellularLocation>
        <location evidence="6">Virion membrane</location>
        <topology evidence="6">Lipid-anchor</topology>
    </subcellularLocation>
    <subcellularLocation>
        <location evidence="1">Host nucleus</location>
    </subcellularLocation>
    <subcellularLocation>
        <location evidence="1">Host cytoplasm</location>
    </subcellularLocation>
</comment>
<comment type="subcellular location">
    <molecule>Capsid protein p24</molecule>
    <subcellularLocation>
        <location evidence="6">Virion</location>
    </subcellularLocation>
</comment>
<comment type="subcellular location">
    <molecule>Nucleocapsid protein p7</molecule>
    <subcellularLocation>
        <location evidence="6">Virion</location>
    </subcellularLocation>
</comment>
<comment type="alternative products">
    <event type="ribosomal frameshifting"/>
    <isoform>
        <id>Q9QBY4-1</id>
        <name>Gag polyprotein</name>
        <sequence type="displayed"/>
    </isoform>
    <isoform>
        <id>Q9QBY3-1</id>
        <name>Gag-Pol polyprotein</name>
        <sequence type="external"/>
    </isoform>
    <text>Translation results in the formation of the Gag polyprotein most of the time. Ribosomal frameshifting at the gag-pol genes boundary occurs at low frequency and produces the Gag-Pol polyprotein. This strategy of translation probably allows the virus to modulate the quantity of each viral protein. Maintenance of a correct Gag to Gag-Pol ratio is essential for RNA dimerization and viral infectivity.</text>
</comment>
<comment type="domain">
    <text evidence="6">Late-budding domains (L domains) are short sequence motifs essential for viral particle budding. They recruit proteins of the host ESCRT machinery (Endosomal Sorting Complex Required for Transport) or ESCRT-associated proteins. p6-gag contains two L domains: a PTAP/PSAP motif, which interacts with the UEV domain of TSG101 and a LYPX(n)L motif which interacts with PDCD6IP/AIP1.</text>
</comment>
<comment type="PTM">
    <text evidence="6">Gag-Pol polyprotein: Specific enzymatic cleavages by the viral protease yield mature proteins.</text>
</comment>
<comment type="PTM">
    <molecule>Matrix protein p17</molecule>
    <text evidence="5">Tyrosine phosphorylated presumably in the virion by a host kinase. Phosphorylation is apparently not a major regulator of membrane association.</text>
</comment>
<comment type="PTM">
    <text evidence="6">Capsid protein p24 is phosphorylated possibly by host MAPK1; this phosphorylation is necessary for Pin1-mediated virion uncoating.</text>
</comment>
<comment type="PTM">
    <text evidence="2">Nucleocapsid protein p7 is methylated by host PRMT6, impairing its function by reducing RNA annealing and the initiation of reverse transcription.</text>
</comment>
<comment type="miscellaneous">
    <text>HIV-1 lineages are divided in three main groups, M (for Major), O (for Outlier), and N (for New, or Non-M, Non-O). The vast majority of strains found worldwide belong to the group M. Group O seems to be endemic to and largely confined to Cameroon and neighboring countries in West Central Africa, where these viruses represent a small minority of HIV-1 strains. The group N is represented by a limited number of isolates from Cameroonian persons. The group M is further subdivided in 9 clades or subtypes (A to D, F to H, J and K).</text>
</comment>
<comment type="miscellaneous">
    <molecule>Isoform Gag polyprotein</molecule>
    <text>Produced by conventional translation.</text>
</comment>
<comment type="similarity">
    <text evidence="10">Belongs to the primate lentivirus group gag polyprotein family.</text>
</comment>
<evidence type="ECO:0000250" key="1"/>
<evidence type="ECO:0000250" key="2">
    <source>
        <dbReference type="UniProtKB" id="P03347"/>
    </source>
</evidence>
<evidence type="ECO:0000250" key="3">
    <source>
        <dbReference type="UniProtKB" id="P03348"/>
    </source>
</evidence>
<evidence type="ECO:0000250" key="4">
    <source>
        <dbReference type="UniProtKB" id="P03349"/>
    </source>
</evidence>
<evidence type="ECO:0000250" key="5">
    <source>
        <dbReference type="UniProtKB" id="P04591"/>
    </source>
</evidence>
<evidence type="ECO:0000250" key="6">
    <source>
        <dbReference type="UniProtKB" id="P12493"/>
    </source>
</evidence>
<evidence type="ECO:0000250" key="7">
    <source>
        <dbReference type="UniProtKB" id="P12497"/>
    </source>
</evidence>
<evidence type="ECO:0000255" key="8">
    <source>
        <dbReference type="PROSITE-ProRule" id="PRU00047"/>
    </source>
</evidence>
<evidence type="ECO:0000256" key="9">
    <source>
        <dbReference type="SAM" id="MobiDB-lite"/>
    </source>
</evidence>
<evidence type="ECO:0000305" key="10"/>
<reference key="1">
    <citation type="journal article" date="2000" name="AIDS Res. Hum. Retroviruses">
        <title>Near-full-length genome sequencing of divergent African HIV type 1 subtype F viruses leads to the identification of a new HIV type 1 subtype designated K.</title>
        <authorList>
            <person name="Triques K."/>
            <person name="Bourgeois A."/>
            <person name="Vidale N."/>
            <person name="Mpoudi-Ngole E."/>
            <person name="Mulanga-Kabeya C."/>
            <person name="Nzilambi N."/>
            <person name="Torimiro N."/>
            <person name="Saman E."/>
            <person name="Delaporte E."/>
            <person name="Peeters M."/>
        </authorList>
    </citation>
    <scope>NUCLEOTIDE SEQUENCE [GENOMIC RNA]</scope>
</reference>
<name>GAG_HV196</name>
<protein>
    <recommendedName>
        <fullName>Gag polyprotein</fullName>
    </recommendedName>
    <alternativeName>
        <fullName>Pr55Gag</fullName>
    </alternativeName>
    <component>
        <recommendedName>
            <fullName>Matrix protein p17</fullName>
            <shortName>MA</shortName>
        </recommendedName>
    </component>
    <component>
        <recommendedName>
            <fullName>Capsid protein p24</fullName>
            <shortName>CA</shortName>
        </recommendedName>
    </component>
    <component>
        <recommendedName>
            <fullName evidence="6">Spacer peptide 1</fullName>
            <shortName>SP1</shortName>
        </recommendedName>
        <alternativeName>
            <fullName>p2</fullName>
        </alternativeName>
    </component>
    <component>
        <recommendedName>
            <fullName>Nucleocapsid protein p7</fullName>
            <shortName>NC</shortName>
        </recommendedName>
    </component>
    <component>
        <recommendedName>
            <fullName evidence="6">Spacer peptide 2</fullName>
            <shortName>SP2</shortName>
        </recommendedName>
        <alternativeName>
            <fullName>p1</fullName>
        </alternativeName>
    </component>
    <component>
        <recommendedName>
            <fullName>p6-gag</fullName>
        </recommendedName>
    </component>
</protein>
<keyword id="KW-0014">AIDS</keyword>
<keyword id="KW-0167">Capsid protein</keyword>
<keyword id="KW-1032">Host cell membrane</keyword>
<keyword id="KW-1035">Host cytoplasm</keyword>
<keyword id="KW-1039">Host endosome</keyword>
<keyword id="KW-1043">Host membrane</keyword>
<keyword id="KW-1048">Host nucleus</keyword>
<keyword id="KW-0945">Host-virus interaction</keyword>
<keyword id="KW-0449">Lipoprotein</keyword>
<keyword id="KW-0472">Membrane</keyword>
<keyword id="KW-0479">Metal-binding</keyword>
<keyword id="KW-0488">Methylation</keyword>
<keyword id="KW-0519">Myristate</keyword>
<keyword id="KW-0597">Phosphoprotein</keyword>
<keyword id="KW-0677">Repeat</keyword>
<keyword id="KW-0688">Ribosomal frameshifting</keyword>
<keyword id="KW-0694">RNA-binding</keyword>
<keyword id="KW-1198">Viral budding</keyword>
<keyword id="KW-1187">Viral budding via the host ESCRT complexes</keyword>
<keyword id="KW-0543">Viral nucleoprotein</keyword>
<keyword id="KW-1188">Viral release from host cell</keyword>
<keyword id="KW-0946">Virion</keyword>
<keyword id="KW-0862">Zinc</keyword>
<keyword id="KW-0863">Zinc-finger</keyword>
<sequence>MGARASVLSGGKLDAWEKIRLRPGGKKKYKLKHLVWASRELERFALNPGLLETTEGCRQIITQIQPSIQTGSEEIKSLYNTIAVLYFVHQKIEVKDTKEALDKLEEEQNKSQRKTQQEAADKGVSQNYPIVQNLQGQMVHQALSPRTLNAWVKVIEEKAFSPEVIPMFTALSEGATPQDLNTMLNTVGGHQAAMQMLKDTINDEAAEWDRLHPVHAGPIPPGQMREPRGSDIAGTTSTLQEQIAWMTSNPPVPVGEIYKRWIILGLNKIVRMYSPVSILDIRQGPKEPFRDYVDRFFKTLRAEQATQEVKNWMTDTLLVQNANPDCKTILKALGPGASLEEMMTACQGVGGPSHKARILAEAMSQVTNPVVMMQKGNFKGHRKIVKCFNCGKEGHIARNCRAPRKKGCWKCGKEGHQMKDCTERQANFLGKIWPSHKGRPGNFLQSRPEPTAPPAESFGFGEEITPSPRQETKDKEQSPPLTSLKSLFGNDPLSQ</sequence>